<comment type="function">
    <text evidence="1">Binds 16S rRNA, required for the assembly of 30S particles and may also be responsible for determining the conformation of the 16S rRNA at the A site.</text>
</comment>
<comment type="subunit">
    <text evidence="1">Part of the 30S ribosomal subunit. Contacts proteins S3 and S10.</text>
</comment>
<comment type="similarity">
    <text evidence="1">Belongs to the universal ribosomal protein uS14 family.</text>
</comment>
<protein>
    <recommendedName>
        <fullName evidence="1">Small ribosomal subunit protein uS14</fullName>
    </recommendedName>
    <alternativeName>
        <fullName evidence="2">30S ribosomal protein S14</fullName>
    </alternativeName>
</protein>
<evidence type="ECO:0000255" key="1">
    <source>
        <dbReference type="HAMAP-Rule" id="MF_00537"/>
    </source>
</evidence>
<evidence type="ECO:0000305" key="2"/>
<dbReference type="EMBL" id="CP001102">
    <property type="protein sequence ID" value="ACE05629.1"/>
    <property type="molecule type" value="Genomic_DNA"/>
</dbReference>
<dbReference type="RefSeq" id="WP_012472394.1">
    <property type="nucleotide sequence ID" value="NC_010830.1"/>
</dbReference>
<dbReference type="SMR" id="B3EUL0"/>
<dbReference type="STRING" id="452471.Aasi_0184"/>
<dbReference type="KEGG" id="aas:Aasi_0184"/>
<dbReference type="eggNOG" id="COG0199">
    <property type="taxonomic scope" value="Bacteria"/>
</dbReference>
<dbReference type="HOGENOM" id="CLU_139869_0_0_10"/>
<dbReference type="OrthoDB" id="9810484at2"/>
<dbReference type="Proteomes" id="UP000001227">
    <property type="component" value="Chromosome"/>
</dbReference>
<dbReference type="GO" id="GO:0005737">
    <property type="term" value="C:cytoplasm"/>
    <property type="evidence" value="ECO:0007669"/>
    <property type="project" value="UniProtKB-ARBA"/>
</dbReference>
<dbReference type="GO" id="GO:0015935">
    <property type="term" value="C:small ribosomal subunit"/>
    <property type="evidence" value="ECO:0007669"/>
    <property type="project" value="TreeGrafter"/>
</dbReference>
<dbReference type="GO" id="GO:0019843">
    <property type="term" value="F:rRNA binding"/>
    <property type="evidence" value="ECO:0007669"/>
    <property type="project" value="UniProtKB-UniRule"/>
</dbReference>
<dbReference type="GO" id="GO:0003735">
    <property type="term" value="F:structural constituent of ribosome"/>
    <property type="evidence" value="ECO:0007669"/>
    <property type="project" value="InterPro"/>
</dbReference>
<dbReference type="GO" id="GO:0006412">
    <property type="term" value="P:translation"/>
    <property type="evidence" value="ECO:0007669"/>
    <property type="project" value="UniProtKB-UniRule"/>
</dbReference>
<dbReference type="Gene3D" id="4.10.830.10">
    <property type="entry name" value="30s Ribosomal Protein S14, Chain N"/>
    <property type="match status" value="1"/>
</dbReference>
<dbReference type="HAMAP" id="MF_00537">
    <property type="entry name" value="Ribosomal_uS14_1"/>
    <property type="match status" value="1"/>
</dbReference>
<dbReference type="InterPro" id="IPR001209">
    <property type="entry name" value="Ribosomal_uS14"/>
</dbReference>
<dbReference type="InterPro" id="IPR023036">
    <property type="entry name" value="Ribosomal_uS14_bac/plastid"/>
</dbReference>
<dbReference type="InterPro" id="IPR018271">
    <property type="entry name" value="Ribosomal_uS14_CS"/>
</dbReference>
<dbReference type="InterPro" id="IPR043140">
    <property type="entry name" value="Ribosomal_uS14_sf"/>
</dbReference>
<dbReference type="NCBIfam" id="NF006477">
    <property type="entry name" value="PRK08881.1"/>
    <property type="match status" value="1"/>
</dbReference>
<dbReference type="PANTHER" id="PTHR19836">
    <property type="entry name" value="30S RIBOSOMAL PROTEIN S14"/>
    <property type="match status" value="1"/>
</dbReference>
<dbReference type="PANTHER" id="PTHR19836:SF19">
    <property type="entry name" value="SMALL RIBOSOMAL SUBUNIT PROTEIN US14M"/>
    <property type="match status" value="1"/>
</dbReference>
<dbReference type="Pfam" id="PF00253">
    <property type="entry name" value="Ribosomal_S14"/>
    <property type="match status" value="1"/>
</dbReference>
<dbReference type="SUPFAM" id="SSF57716">
    <property type="entry name" value="Glucocorticoid receptor-like (DNA-binding domain)"/>
    <property type="match status" value="1"/>
</dbReference>
<dbReference type="PROSITE" id="PS00527">
    <property type="entry name" value="RIBOSOMAL_S14"/>
    <property type="match status" value="1"/>
</dbReference>
<sequence>MAKESVKARNLKRQALVERYAAKRAKLKEAGDYLALDKLPKNASPVRVRNRCKITGRARGYMRKFGISRIVFREWAAQGKIPGVIKASW</sequence>
<reference key="1">
    <citation type="journal article" date="2010" name="J. Bacteriol.">
        <title>The genome of the amoeba symbiont 'Candidatus Amoebophilus asiaticus' reveals common mechanisms for host cell interaction among amoeba-associated bacteria.</title>
        <authorList>
            <person name="Schmitz-Esser S."/>
            <person name="Tischler P."/>
            <person name="Arnold R."/>
            <person name="Montanaro J."/>
            <person name="Wagner M."/>
            <person name="Rattei T."/>
            <person name="Horn M."/>
        </authorList>
    </citation>
    <scope>NUCLEOTIDE SEQUENCE [LARGE SCALE GENOMIC DNA]</scope>
    <source>
        <strain>5a2</strain>
    </source>
</reference>
<keyword id="KW-1185">Reference proteome</keyword>
<keyword id="KW-0687">Ribonucleoprotein</keyword>
<keyword id="KW-0689">Ribosomal protein</keyword>
<keyword id="KW-0694">RNA-binding</keyword>
<keyword id="KW-0699">rRNA-binding</keyword>
<feature type="chain" id="PRO_1000128293" description="Small ribosomal subunit protein uS14">
    <location>
        <begin position="1"/>
        <end position="89"/>
    </location>
</feature>
<organism>
    <name type="scientific">Amoebophilus asiaticus (strain 5a2)</name>
    <dbReference type="NCBI Taxonomy" id="452471"/>
    <lineage>
        <taxon>Bacteria</taxon>
        <taxon>Pseudomonadati</taxon>
        <taxon>Bacteroidota</taxon>
        <taxon>Cytophagia</taxon>
        <taxon>Cytophagales</taxon>
        <taxon>Amoebophilaceae</taxon>
        <taxon>Candidatus Amoebophilus</taxon>
    </lineage>
</organism>
<gene>
    <name evidence="1" type="primary">rpsN</name>
    <name type="ordered locus">Aasi_0184</name>
</gene>
<name>RS14_AMOA5</name>
<proteinExistence type="inferred from homology"/>
<accession>B3EUL0</accession>